<proteinExistence type="evidence at transcript level"/>
<dbReference type="EMBL" id="M55918">
    <property type="protein sequence ID" value="AAA91824.1"/>
    <property type="molecule type" value="Genomic_DNA"/>
</dbReference>
<dbReference type="EMBL" id="M81223">
    <property type="protein sequence ID" value="AAA42884.1"/>
    <property type="molecule type" value="Genomic_DNA"/>
</dbReference>
<dbReference type="PIR" id="C39926">
    <property type="entry name" value="C39926"/>
</dbReference>
<dbReference type="KEGG" id="vg:1494446"/>
<dbReference type="Proteomes" id="UP000007528">
    <property type="component" value="Segment"/>
</dbReference>
<dbReference type="GO" id="GO:0043657">
    <property type="term" value="C:host cell"/>
    <property type="evidence" value="ECO:0007669"/>
    <property type="project" value="GOC"/>
</dbReference>
<dbReference type="GO" id="GO:0042025">
    <property type="term" value="C:host cell nucleus"/>
    <property type="evidence" value="ECO:0007669"/>
    <property type="project" value="UniProtKB-SubCell"/>
</dbReference>
<dbReference type="GO" id="GO:0039615">
    <property type="term" value="C:T=1 icosahedral viral capsid"/>
    <property type="evidence" value="ECO:0007669"/>
    <property type="project" value="UniProtKB-KW"/>
</dbReference>
<dbReference type="GO" id="GO:0003677">
    <property type="term" value="F:DNA binding"/>
    <property type="evidence" value="ECO:0007669"/>
    <property type="project" value="UniProtKB-KW"/>
</dbReference>
<dbReference type="GO" id="GO:0075509">
    <property type="term" value="P:endocytosis involved in viral entry into host cell"/>
    <property type="evidence" value="ECO:0007669"/>
    <property type="project" value="UniProtKB-KW"/>
</dbReference>
<dbReference type="GO" id="GO:0075732">
    <property type="term" value="P:viral penetration into host nucleus"/>
    <property type="evidence" value="ECO:0007669"/>
    <property type="project" value="UniProtKB-KW"/>
</dbReference>
<dbReference type="GO" id="GO:0019062">
    <property type="term" value="P:virion attachment to host cell"/>
    <property type="evidence" value="ECO:0007669"/>
    <property type="project" value="UniProtKB-KW"/>
</dbReference>
<dbReference type="InterPro" id="IPR007291">
    <property type="entry name" value="Capsid_protein"/>
</dbReference>
<dbReference type="Pfam" id="PF04162">
    <property type="entry name" value="Gyro_capsid"/>
    <property type="match status" value="1"/>
</dbReference>
<sequence>MARRARRPRGRFYSFRRGRWHHLKRLRRRYKFRHRRRQRYRRRAFRKAFHNPRPGTYSVRLPNPQSTMTIRFQGVIFLTEGLILPKNSTAGGYADHMYGARVAKISVNLKEFLLASMNLTYVSKIGGPIAGELIADGSKSQAADNWPNCWLPLDNNVPSATPSAWWRWALMMMQPTDSCRFFNHPKQMTLQDMGRMFGGWHLFRHIETRFQLLATKNEGSFSPVASLLSQGEYLTRRDDVKYSSDHQNRWQKGGQPMTGGIAYATGKMRPDEQQYPAMPPDPPIITATTAQGTQVRCMNSTQAWWSWDTYMSFATLTALGAQWSFPPGQRSVSRRSFNHHKARGAGDPKGQRWHTLVPLGTETITDSYMSAPASELDTNFFTLYVAQGTNKSQQYKFGTATYALKEPVMKSDAWAVVRVQSVWQLGNRQRPYPWDVNWANSTMYWGTQP</sequence>
<feature type="chain" id="PRO_0000223000" description="Capsid protein">
    <location>
        <begin position="1"/>
        <end position="449"/>
    </location>
</feature>
<feature type="region of interest" description="DNA-binding" evidence="1">
    <location>
        <begin position="1"/>
        <end position="43"/>
    </location>
</feature>
<feature type="region of interest" description="Nuclear localization signals" evidence="2">
    <location>
        <begin position="6"/>
        <end position="47"/>
    </location>
</feature>
<feature type="sequence conflict" description="In Ref. 2; AAA42884." evidence="5" ref="2">
    <original>S</original>
    <variation>A</variation>
    <location>
        <position position="14"/>
    </location>
</feature>
<feature type="sequence conflict" description="In Ref. 2; AAA42884." evidence="5" ref="2">
    <original>R</original>
    <variation>K</variation>
    <location>
        <position position="29"/>
    </location>
</feature>
<feature type="sequence conflict" description="In Ref. 2; AAA42884." evidence="5" ref="2">
    <original>G</original>
    <variation>E</variation>
    <location>
        <position position="254"/>
    </location>
</feature>
<feature type="sequence conflict" description="In Ref. 2; AAA42884." evidence="5" ref="2">
    <original>T</original>
    <variation>N</variation>
    <location>
        <position position="265"/>
    </location>
</feature>
<feature type="sequence conflict" description="In Ref. 2; AAA42884." evidence="5" ref="2">
    <original>A</original>
    <variation>R</variation>
    <location>
        <position position="321"/>
    </location>
</feature>
<gene>
    <name type="primary">VP1</name>
</gene>
<organismHost>
    <name type="scientific">Gallus gallus</name>
    <name type="common">Chicken</name>
    <dbReference type="NCBI Taxonomy" id="9031"/>
</organismHost>
<comment type="function">
    <text evidence="1 4">Self-assembles to form the virion icosahedral capsid with a T=1 symmetry. This very small capsid (25 nm in diameter) allows the virus to be very stable in the environment and resistant to some disinfectants, including detergents. Essential for the initial attachment to host receptors. After attachment, the virus is endocytosed and traffics to the nucleus. The capsid protein binds and transports the viral genome and Rep across the nuclear envelope (By similarity).</text>
</comment>
<comment type="subunit">
    <text evidence="1 5">Homomultimer (Potential). Interacts with Rep; this interaction relocates Rep into the nucleus (By similarity).</text>
</comment>
<comment type="subcellular location">
    <subcellularLocation>
        <location evidence="1">Host nucleus</location>
    </subcellularLocation>
    <subcellularLocation>
        <location evidence="5">Virion</location>
    </subcellularLocation>
</comment>
<comment type="induction">
    <text evidence="3">VP1 and VP2 are detected 12 hours post infection, while VP3 only after 24 hours.</text>
</comment>
<comment type="similarity">
    <text evidence="5">Belongs to the gyrovirus capsid protein family.</text>
</comment>
<reference key="1">
    <citation type="journal article" date="1991" name="J. Virol.">
        <title>Characterization of cloned chicken anemia virus DNA that contains all elements for the infectious replication cycle.</title>
        <authorList>
            <person name="Noteborn M.H.M."/>
            <person name="de Boer G.F."/>
            <person name="van Roozelaar D.J."/>
            <person name="Karreman C."/>
            <person name="Kranenburg O."/>
            <person name="Vos J.G."/>
            <person name="Jeurissen S.H.M."/>
            <person name="Hoeben R.C."/>
            <person name="Zantema A."/>
            <person name="Koch G."/>
            <person name="van Ormondt H."/>
            <person name="van der Eb A.J."/>
        </authorList>
    </citation>
    <scope>NUCLEOTIDE SEQUENCE [GENOMIC DNA]</scope>
</reference>
<reference key="2">
    <citation type="journal article" date="1992" name="Arch. Virol.">
        <title>Characterization of viral DNAs from cells infected with chicken anaemia agent: sequence analysis of the cloned replicative form and transfection capabilities of cloned genome fragments.</title>
        <authorList>
            <person name="Meehan B.M."/>
            <person name="Todd D."/>
            <person name="Creelan J.L."/>
            <person name="Earle J.A.P."/>
            <person name="Hoey E.M."/>
            <person name="McNulty M.S."/>
        </authorList>
    </citation>
    <scope>NUCLEOTIDE SEQUENCE [GENOMIC DNA]</scope>
</reference>
<reference key="3">
    <citation type="journal article" date="1992" name="Gene">
        <title>Transcription of the chicken anemia virus (CAV) genome and synthesis of its 52-kDa protein.</title>
        <authorList>
            <person name="Noteborn M.H.M."/>
            <person name="Kranenburg O."/>
            <person name="Zantema A."/>
            <person name="Koch G."/>
            <person name="de Boer G.F."/>
            <person name="van der Eb A.J."/>
        </authorList>
    </citation>
    <scope>EXPRESSION</scope>
</reference>
<reference key="4">
    <citation type="journal article" date="1995" name="J. Gen. Virol.">
        <title>Identification of a 24 kDa protein expressed by chicken anaemia virus.</title>
        <authorList>
            <person name="Douglas A.J."/>
            <person name="Phenix K."/>
            <person name="Mawhinney K.A."/>
            <person name="Todd D."/>
            <person name="Mackie D.P."/>
            <person name="Curran W.L."/>
        </authorList>
    </citation>
    <scope>INDUCTION</scope>
</reference>
<reference key="5">
    <citation type="journal article" date="1998" name="J. Gen. Virol.">
        <title>Simultaneous expression of recombinant baculovirus-encoded chicken anaemia virus (CAV) proteins VP1 and VP2 is required for formation of the CAV-specific neutralizing epitope.</title>
        <authorList>
            <person name="Noteborn M.H."/>
            <person name="Verschueren C.A."/>
            <person name="Koch G."/>
            <person name="Van der Eb A.J."/>
        </authorList>
    </citation>
    <scope>FUNCTION</scope>
</reference>
<name>CAPSD_CAVC1</name>
<keyword id="KW-0167">Capsid protein</keyword>
<keyword id="KW-0238">DNA-binding</keyword>
<keyword id="KW-1048">Host nucleus</keyword>
<keyword id="KW-0945">Host-virus interaction</keyword>
<keyword id="KW-0426">Late protein</keyword>
<keyword id="KW-1185">Reference proteome</keyword>
<keyword id="KW-1140">T=1 icosahedral capsid protein</keyword>
<keyword id="KW-1161">Viral attachment to host cell</keyword>
<keyword id="KW-1162">Viral penetration into host cytoplasm</keyword>
<keyword id="KW-1163">Viral penetration into host nucleus</keyword>
<keyword id="KW-0946">Virion</keyword>
<keyword id="KW-1164">Virus endocytosis by host</keyword>
<keyword id="KW-1160">Virus entry into host cell</keyword>
<evidence type="ECO:0000250" key="1"/>
<evidence type="ECO:0000255" key="2"/>
<evidence type="ECO:0000269" key="3">
    <source>
    </source>
</evidence>
<evidence type="ECO:0000269" key="4">
    <source>
    </source>
</evidence>
<evidence type="ECO:0000305" key="5"/>
<organism>
    <name type="scientific">Chicken anemia virus (isolate Germany Cuxhaven-1)</name>
    <name type="common">CAV</name>
    <dbReference type="NCBI Taxonomy" id="73475"/>
    <lineage>
        <taxon>Viruses</taxon>
        <taxon>Viruses incertae sedis</taxon>
        <taxon>Anelloviridae</taxon>
        <taxon>Gyrovirus</taxon>
        <taxon>Gyrovirus chickenanemia</taxon>
    </lineage>
</organism>
<protein>
    <recommendedName>
        <fullName>Capsid protein</fullName>
    </recommendedName>
    <alternativeName>
        <fullName>CA1</fullName>
    </alternativeName>
    <alternativeName>
        <fullName>Coat protein</fullName>
    </alternativeName>
</protein>
<accession>Q99153</accession>